<comment type="function">
    <text evidence="1">Catalyzes the conversion of glucosamine-6-phosphate to glucosamine-1-phosphate.</text>
</comment>
<comment type="catalytic activity">
    <reaction evidence="1">
        <text>alpha-D-glucosamine 1-phosphate = D-glucosamine 6-phosphate</text>
        <dbReference type="Rhea" id="RHEA:23424"/>
        <dbReference type="ChEBI" id="CHEBI:58516"/>
        <dbReference type="ChEBI" id="CHEBI:58725"/>
        <dbReference type="EC" id="5.4.2.10"/>
    </reaction>
</comment>
<comment type="cofactor">
    <cofactor evidence="1">
        <name>Mg(2+)</name>
        <dbReference type="ChEBI" id="CHEBI:18420"/>
    </cofactor>
    <text evidence="1">Binds 1 Mg(2+) ion per subunit.</text>
</comment>
<comment type="PTM">
    <text evidence="1">Activated by phosphorylation.</text>
</comment>
<comment type="similarity">
    <text evidence="1">Belongs to the phosphohexose mutase family.</text>
</comment>
<keyword id="KW-0413">Isomerase</keyword>
<keyword id="KW-0460">Magnesium</keyword>
<keyword id="KW-0479">Metal-binding</keyword>
<keyword id="KW-0597">Phosphoprotein</keyword>
<name>GLMM_YERE8</name>
<dbReference type="EC" id="5.4.2.10" evidence="1"/>
<dbReference type="EMBL" id="AM286415">
    <property type="protein sequence ID" value="CAL10556.1"/>
    <property type="molecule type" value="Genomic_DNA"/>
</dbReference>
<dbReference type="RefSeq" id="WP_005175398.1">
    <property type="nucleotide sequence ID" value="NC_008800.1"/>
</dbReference>
<dbReference type="RefSeq" id="YP_001004800.1">
    <property type="nucleotide sequence ID" value="NC_008800.1"/>
</dbReference>
<dbReference type="SMR" id="A1JIW5"/>
<dbReference type="KEGG" id="yen:YE0430"/>
<dbReference type="PATRIC" id="fig|393305.7.peg.526"/>
<dbReference type="eggNOG" id="COG1109">
    <property type="taxonomic scope" value="Bacteria"/>
</dbReference>
<dbReference type="HOGENOM" id="CLU_016950_7_0_6"/>
<dbReference type="OrthoDB" id="9803322at2"/>
<dbReference type="Proteomes" id="UP000000642">
    <property type="component" value="Chromosome"/>
</dbReference>
<dbReference type="GO" id="GO:0005829">
    <property type="term" value="C:cytosol"/>
    <property type="evidence" value="ECO:0007669"/>
    <property type="project" value="TreeGrafter"/>
</dbReference>
<dbReference type="GO" id="GO:0000287">
    <property type="term" value="F:magnesium ion binding"/>
    <property type="evidence" value="ECO:0007669"/>
    <property type="project" value="UniProtKB-UniRule"/>
</dbReference>
<dbReference type="GO" id="GO:0008966">
    <property type="term" value="F:phosphoglucosamine mutase activity"/>
    <property type="evidence" value="ECO:0007669"/>
    <property type="project" value="UniProtKB-UniRule"/>
</dbReference>
<dbReference type="GO" id="GO:0004615">
    <property type="term" value="F:phosphomannomutase activity"/>
    <property type="evidence" value="ECO:0007669"/>
    <property type="project" value="TreeGrafter"/>
</dbReference>
<dbReference type="GO" id="GO:0005975">
    <property type="term" value="P:carbohydrate metabolic process"/>
    <property type="evidence" value="ECO:0007669"/>
    <property type="project" value="InterPro"/>
</dbReference>
<dbReference type="GO" id="GO:0009252">
    <property type="term" value="P:peptidoglycan biosynthetic process"/>
    <property type="evidence" value="ECO:0007669"/>
    <property type="project" value="TreeGrafter"/>
</dbReference>
<dbReference type="GO" id="GO:0006048">
    <property type="term" value="P:UDP-N-acetylglucosamine biosynthetic process"/>
    <property type="evidence" value="ECO:0007669"/>
    <property type="project" value="TreeGrafter"/>
</dbReference>
<dbReference type="CDD" id="cd05802">
    <property type="entry name" value="GlmM"/>
    <property type="match status" value="1"/>
</dbReference>
<dbReference type="FunFam" id="3.30.310.50:FF:000001">
    <property type="entry name" value="Phosphoglucosamine mutase"/>
    <property type="match status" value="1"/>
</dbReference>
<dbReference type="FunFam" id="3.40.120.10:FF:000001">
    <property type="entry name" value="Phosphoglucosamine mutase"/>
    <property type="match status" value="1"/>
</dbReference>
<dbReference type="FunFam" id="3.40.120.10:FF:000002">
    <property type="entry name" value="Phosphoglucosamine mutase"/>
    <property type="match status" value="1"/>
</dbReference>
<dbReference type="Gene3D" id="3.40.120.10">
    <property type="entry name" value="Alpha-D-Glucose-1,6-Bisphosphate, subunit A, domain 3"/>
    <property type="match status" value="3"/>
</dbReference>
<dbReference type="Gene3D" id="3.30.310.50">
    <property type="entry name" value="Alpha-D-phosphohexomutase, C-terminal domain"/>
    <property type="match status" value="1"/>
</dbReference>
<dbReference type="HAMAP" id="MF_01554_B">
    <property type="entry name" value="GlmM_B"/>
    <property type="match status" value="1"/>
</dbReference>
<dbReference type="InterPro" id="IPR005844">
    <property type="entry name" value="A-D-PHexomutase_a/b/a-I"/>
</dbReference>
<dbReference type="InterPro" id="IPR016055">
    <property type="entry name" value="A-D-PHexomutase_a/b/a-I/II/III"/>
</dbReference>
<dbReference type="InterPro" id="IPR005845">
    <property type="entry name" value="A-D-PHexomutase_a/b/a-II"/>
</dbReference>
<dbReference type="InterPro" id="IPR005846">
    <property type="entry name" value="A-D-PHexomutase_a/b/a-III"/>
</dbReference>
<dbReference type="InterPro" id="IPR005843">
    <property type="entry name" value="A-D-PHexomutase_C"/>
</dbReference>
<dbReference type="InterPro" id="IPR036900">
    <property type="entry name" value="A-D-PHexomutase_C_sf"/>
</dbReference>
<dbReference type="InterPro" id="IPR016066">
    <property type="entry name" value="A-D-PHexomutase_CS"/>
</dbReference>
<dbReference type="InterPro" id="IPR005841">
    <property type="entry name" value="Alpha-D-phosphohexomutase_SF"/>
</dbReference>
<dbReference type="InterPro" id="IPR006352">
    <property type="entry name" value="GlmM_bact"/>
</dbReference>
<dbReference type="InterPro" id="IPR050060">
    <property type="entry name" value="Phosphoglucosamine_mutase"/>
</dbReference>
<dbReference type="NCBIfam" id="TIGR01455">
    <property type="entry name" value="glmM"/>
    <property type="match status" value="1"/>
</dbReference>
<dbReference type="NCBIfam" id="NF008139">
    <property type="entry name" value="PRK10887.1"/>
    <property type="match status" value="1"/>
</dbReference>
<dbReference type="PANTHER" id="PTHR42946:SF1">
    <property type="entry name" value="PHOSPHOGLUCOMUTASE (ALPHA-D-GLUCOSE-1,6-BISPHOSPHATE-DEPENDENT)"/>
    <property type="match status" value="1"/>
</dbReference>
<dbReference type="PANTHER" id="PTHR42946">
    <property type="entry name" value="PHOSPHOHEXOSE MUTASE"/>
    <property type="match status" value="1"/>
</dbReference>
<dbReference type="Pfam" id="PF02878">
    <property type="entry name" value="PGM_PMM_I"/>
    <property type="match status" value="1"/>
</dbReference>
<dbReference type="Pfam" id="PF02879">
    <property type="entry name" value="PGM_PMM_II"/>
    <property type="match status" value="1"/>
</dbReference>
<dbReference type="Pfam" id="PF02880">
    <property type="entry name" value="PGM_PMM_III"/>
    <property type="match status" value="1"/>
</dbReference>
<dbReference type="Pfam" id="PF00408">
    <property type="entry name" value="PGM_PMM_IV"/>
    <property type="match status" value="1"/>
</dbReference>
<dbReference type="PRINTS" id="PR00509">
    <property type="entry name" value="PGMPMM"/>
</dbReference>
<dbReference type="SUPFAM" id="SSF55957">
    <property type="entry name" value="Phosphoglucomutase, C-terminal domain"/>
    <property type="match status" value="1"/>
</dbReference>
<dbReference type="SUPFAM" id="SSF53738">
    <property type="entry name" value="Phosphoglucomutase, first 3 domains"/>
    <property type="match status" value="3"/>
</dbReference>
<dbReference type="PROSITE" id="PS00710">
    <property type="entry name" value="PGM_PMM"/>
    <property type="match status" value="1"/>
</dbReference>
<organism>
    <name type="scientific">Yersinia enterocolitica serotype O:8 / biotype 1B (strain NCTC 13174 / 8081)</name>
    <dbReference type="NCBI Taxonomy" id="393305"/>
    <lineage>
        <taxon>Bacteria</taxon>
        <taxon>Pseudomonadati</taxon>
        <taxon>Pseudomonadota</taxon>
        <taxon>Gammaproteobacteria</taxon>
        <taxon>Enterobacterales</taxon>
        <taxon>Yersiniaceae</taxon>
        <taxon>Yersinia</taxon>
    </lineage>
</organism>
<evidence type="ECO:0000255" key="1">
    <source>
        <dbReference type="HAMAP-Rule" id="MF_01554"/>
    </source>
</evidence>
<gene>
    <name evidence="1" type="primary">glmM</name>
    <name type="ordered locus">YE0430</name>
</gene>
<accession>A1JIW5</accession>
<sequence>MSDRKYFGTDGIRGKVGDSPITPDFVLKLGWAAGKVLARHGSRKIIIGKDTRISGYMLESALEAGLAAAGLSASFTGPMPTPAVAYLTRTFRAEAGIVISASHNPFYDNGIKFFSIDGTKLPDDVEEAIEAEMEKPLTCVESAELGKANRIVDAAGRYIEFCKGTFPSELSLNELKIVVDCANGATYHIAPSVLRELGATVITIGCEPDGMNINEKCGATDVRLLQERVLAEKADVGLAFDGDGDRLMMVDHLGNKVDGDQILYIIAREGLRQGQLKGGAVGTLMSNMGLQLALKELGIPFVRAKVGDRYVLEAMQEKGWRIGAENSGHVILLDKTTTGDGIVAGLQVLTAMVRNHMTLHDLCSGMKLLPQILVNVRFSGDHNPLKSENVEEVTRQVEKELGDRGRVLLRKSGTEPLIRVMVEGDDAESVIAEMANRIADAVKAAG</sequence>
<protein>
    <recommendedName>
        <fullName evidence="1">Phosphoglucosamine mutase</fullName>
        <ecNumber evidence="1">5.4.2.10</ecNumber>
    </recommendedName>
</protein>
<feature type="chain" id="PRO_0000301403" description="Phosphoglucosamine mutase">
    <location>
        <begin position="1"/>
        <end position="446"/>
    </location>
</feature>
<feature type="active site" description="Phosphoserine intermediate" evidence="1">
    <location>
        <position position="102"/>
    </location>
</feature>
<feature type="binding site" description="via phosphate group" evidence="1">
    <location>
        <position position="102"/>
    </location>
    <ligand>
        <name>Mg(2+)</name>
        <dbReference type="ChEBI" id="CHEBI:18420"/>
    </ligand>
</feature>
<feature type="binding site" evidence="1">
    <location>
        <position position="241"/>
    </location>
    <ligand>
        <name>Mg(2+)</name>
        <dbReference type="ChEBI" id="CHEBI:18420"/>
    </ligand>
</feature>
<feature type="binding site" evidence="1">
    <location>
        <position position="243"/>
    </location>
    <ligand>
        <name>Mg(2+)</name>
        <dbReference type="ChEBI" id="CHEBI:18420"/>
    </ligand>
</feature>
<feature type="binding site" evidence="1">
    <location>
        <position position="245"/>
    </location>
    <ligand>
        <name>Mg(2+)</name>
        <dbReference type="ChEBI" id="CHEBI:18420"/>
    </ligand>
</feature>
<feature type="modified residue" description="Phosphoserine" evidence="1">
    <location>
        <position position="102"/>
    </location>
</feature>
<proteinExistence type="inferred from homology"/>
<reference key="1">
    <citation type="journal article" date="2006" name="PLoS Genet.">
        <title>The complete genome sequence and comparative genome analysis of the high pathogenicity Yersinia enterocolitica strain 8081.</title>
        <authorList>
            <person name="Thomson N.R."/>
            <person name="Howard S."/>
            <person name="Wren B.W."/>
            <person name="Holden M.T.G."/>
            <person name="Crossman L."/>
            <person name="Challis G.L."/>
            <person name="Churcher C."/>
            <person name="Mungall K."/>
            <person name="Brooks K."/>
            <person name="Chillingworth T."/>
            <person name="Feltwell T."/>
            <person name="Abdellah Z."/>
            <person name="Hauser H."/>
            <person name="Jagels K."/>
            <person name="Maddison M."/>
            <person name="Moule S."/>
            <person name="Sanders M."/>
            <person name="Whitehead S."/>
            <person name="Quail M.A."/>
            <person name="Dougan G."/>
            <person name="Parkhill J."/>
            <person name="Prentice M.B."/>
        </authorList>
    </citation>
    <scope>NUCLEOTIDE SEQUENCE [LARGE SCALE GENOMIC DNA]</scope>
    <source>
        <strain>NCTC 13174 / 8081</strain>
    </source>
</reference>